<reference key="1">
    <citation type="submission" date="2008-08" db="EMBL/GenBank/DDBJ databases">
        <title>Complete sequence of Vibrio fischeri strain MJ11.</title>
        <authorList>
            <person name="Mandel M.J."/>
            <person name="Stabb E.V."/>
            <person name="Ruby E.G."/>
            <person name="Ferriera S."/>
            <person name="Johnson J."/>
            <person name="Kravitz S."/>
            <person name="Beeson K."/>
            <person name="Sutton G."/>
            <person name="Rogers Y.-H."/>
            <person name="Friedman R."/>
            <person name="Frazier M."/>
            <person name="Venter J.C."/>
        </authorList>
    </citation>
    <scope>NUCLEOTIDE SEQUENCE [LARGE SCALE GENOMIC DNA]</scope>
    <source>
        <strain>MJ11</strain>
    </source>
</reference>
<organism>
    <name type="scientific">Aliivibrio fischeri (strain MJ11)</name>
    <name type="common">Vibrio fischeri</name>
    <dbReference type="NCBI Taxonomy" id="388396"/>
    <lineage>
        <taxon>Bacteria</taxon>
        <taxon>Pseudomonadati</taxon>
        <taxon>Pseudomonadota</taxon>
        <taxon>Gammaproteobacteria</taxon>
        <taxon>Vibrionales</taxon>
        <taxon>Vibrionaceae</taxon>
        <taxon>Aliivibrio</taxon>
    </lineage>
</organism>
<feature type="chain" id="PRO_1000096390" description="Phosphoglycerate kinase">
    <location>
        <begin position="1"/>
        <end position="387"/>
    </location>
</feature>
<feature type="binding site" evidence="1">
    <location>
        <begin position="21"/>
        <end position="23"/>
    </location>
    <ligand>
        <name>substrate</name>
    </ligand>
</feature>
<feature type="binding site" evidence="1">
    <location>
        <position position="36"/>
    </location>
    <ligand>
        <name>substrate</name>
    </ligand>
</feature>
<feature type="binding site" evidence="1">
    <location>
        <begin position="59"/>
        <end position="62"/>
    </location>
    <ligand>
        <name>substrate</name>
    </ligand>
</feature>
<feature type="binding site" evidence="1">
    <location>
        <position position="113"/>
    </location>
    <ligand>
        <name>substrate</name>
    </ligand>
</feature>
<feature type="binding site" evidence="1">
    <location>
        <position position="146"/>
    </location>
    <ligand>
        <name>substrate</name>
    </ligand>
</feature>
<feature type="binding site" evidence="1">
    <location>
        <position position="197"/>
    </location>
    <ligand>
        <name>ATP</name>
        <dbReference type="ChEBI" id="CHEBI:30616"/>
    </ligand>
</feature>
<feature type="binding site" evidence="1">
    <location>
        <position position="314"/>
    </location>
    <ligand>
        <name>ATP</name>
        <dbReference type="ChEBI" id="CHEBI:30616"/>
    </ligand>
</feature>
<feature type="binding site" evidence="1">
    <location>
        <begin position="340"/>
        <end position="343"/>
    </location>
    <ligand>
        <name>ATP</name>
        <dbReference type="ChEBI" id="CHEBI:30616"/>
    </ligand>
</feature>
<name>PGK_ALIFM</name>
<dbReference type="EC" id="2.7.2.3" evidence="1"/>
<dbReference type="EMBL" id="CP001139">
    <property type="protein sequence ID" value="ACH65370.1"/>
    <property type="molecule type" value="Genomic_DNA"/>
</dbReference>
<dbReference type="RefSeq" id="WP_005417586.1">
    <property type="nucleotide sequence ID" value="NC_011184.1"/>
</dbReference>
<dbReference type="SMR" id="B5F9T5"/>
<dbReference type="KEGG" id="vfm:VFMJ11_0442"/>
<dbReference type="HOGENOM" id="CLU_025427_0_2_6"/>
<dbReference type="UniPathway" id="UPA00109">
    <property type="reaction ID" value="UER00185"/>
</dbReference>
<dbReference type="Proteomes" id="UP000001857">
    <property type="component" value="Chromosome I"/>
</dbReference>
<dbReference type="GO" id="GO:0005829">
    <property type="term" value="C:cytosol"/>
    <property type="evidence" value="ECO:0007669"/>
    <property type="project" value="TreeGrafter"/>
</dbReference>
<dbReference type="GO" id="GO:0043531">
    <property type="term" value="F:ADP binding"/>
    <property type="evidence" value="ECO:0007669"/>
    <property type="project" value="TreeGrafter"/>
</dbReference>
<dbReference type="GO" id="GO:0005524">
    <property type="term" value="F:ATP binding"/>
    <property type="evidence" value="ECO:0007669"/>
    <property type="project" value="UniProtKB-KW"/>
</dbReference>
<dbReference type="GO" id="GO:0004618">
    <property type="term" value="F:phosphoglycerate kinase activity"/>
    <property type="evidence" value="ECO:0007669"/>
    <property type="project" value="UniProtKB-UniRule"/>
</dbReference>
<dbReference type="GO" id="GO:0006094">
    <property type="term" value="P:gluconeogenesis"/>
    <property type="evidence" value="ECO:0007669"/>
    <property type="project" value="TreeGrafter"/>
</dbReference>
<dbReference type="GO" id="GO:0006096">
    <property type="term" value="P:glycolytic process"/>
    <property type="evidence" value="ECO:0007669"/>
    <property type="project" value="UniProtKB-UniRule"/>
</dbReference>
<dbReference type="FunFam" id="3.40.50.1260:FF:000001">
    <property type="entry name" value="Phosphoglycerate kinase"/>
    <property type="match status" value="1"/>
</dbReference>
<dbReference type="FunFam" id="3.40.50.1260:FF:000002">
    <property type="entry name" value="Phosphoglycerate kinase"/>
    <property type="match status" value="1"/>
</dbReference>
<dbReference type="Gene3D" id="3.40.50.1260">
    <property type="entry name" value="Phosphoglycerate kinase, N-terminal domain"/>
    <property type="match status" value="2"/>
</dbReference>
<dbReference type="HAMAP" id="MF_00145">
    <property type="entry name" value="Phosphoglyc_kinase"/>
    <property type="match status" value="1"/>
</dbReference>
<dbReference type="InterPro" id="IPR001576">
    <property type="entry name" value="Phosphoglycerate_kinase"/>
</dbReference>
<dbReference type="InterPro" id="IPR015911">
    <property type="entry name" value="Phosphoglycerate_kinase_CS"/>
</dbReference>
<dbReference type="InterPro" id="IPR015824">
    <property type="entry name" value="Phosphoglycerate_kinase_N"/>
</dbReference>
<dbReference type="InterPro" id="IPR036043">
    <property type="entry name" value="Phosphoglycerate_kinase_sf"/>
</dbReference>
<dbReference type="PANTHER" id="PTHR11406">
    <property type="entry name" value="PHOSPHOGLYCERATE KINASE"/>
    <property type="match status" value="1"/>
</dbReference>
<dbReference type="PANTHER" id="PTHR11406:SF23">
    <property type="entry name" value="PHOSPHOGLYCERATE KINASE 1, CHLOROPLASTIC-RELATED"/>
    <property type="match status" value="1"/>
</dbReference>
<dbReference type="Pfam" id="PF00162">
    <property type="entry name" value="PGK"/>
    <property type="match status" value="1"/>
</dbReference>
<dbReference type="PIRSF" id="PIRSF000724">
    <property type="entry name" value="Pgk"/>
    <property type="match status" value="1"/>
</dbReference>
<dbReference type="PRINTS" id="PR00477">
    <property type="entry name" value="PHGLYCKINASE"/>
</dbReference>
<dbReference type="SUPFAM" id="SSF53748">
    <property type="entry name" value="Phosphoglycerate kinase"/>
    <property type="match status" value="1"/>
</dbReference>
<dbReference type="PROSITE" id="PS00111">
    <property type="entry name" value="PGLYCERATE_KINASE"/>
    <property type="match status" value="1"/>
</dbReference>
<evidence type="ECO:0000255" key="1">
    <source>
        <dbReference type="HAMAP-Rule" id="MF_00145"/>
    </source>
</evidence>
<gene>
    <name evidence="1" type="primary">pgk</name>
    <name type="ordered locus">VFMJ11_0442</name>
</gene>
<proteinExistence type="inferred from homology"/>
<comment type="catalytic activity">
    <reaction evidence="1">
        <text>(2R)-3-phosphoglycerate + ATP = (2R)-3-phospho-glyceroyl phosphate + ADP</text>
        <dbReference type="Rhea" id="RHEA:14801"/>
        <dbReference type="ChEBI" id="CHEBI:30616"/>
        <dbReference type="ChEBI" id="CHEBI:57604"/>
        <dbReference type="ChEBI" id="CHEBI:58272"/>
        <dbReference type="ChEBI" id="CHEBI:456216"/>
        <dbReference type="EC" id="2.7.2.3"/>
    </reaction>
</comment>
<comment type="pathway">
    <text evidence="1">Carbohydrate degradation; glycolysis; pyruvate from D-glyceraldehyde 3-phosphate: step 2/5.</text>
</comment>
<comment type="subunit">
    <text evidence="1">Monomer.</text>
</comment>
<comment type="subcellular location">
    <subcellularLocation>
        <location evidence="1">Cytoplasm</location>
    </subcellularLocation>
</comment>
<comment type="similarity">
    <text evidence="1">Belongs to the phosphoglycerate kinase family.</text>
</comment>
<sequence length="387" mass="40682">MSVIKMTDLELAGKRVFIRADLNVPVKDGKVTSDARILASLPTIKLCLEAGAKVMVTSHLGRPTEGEYNEEFSLAPVVNYLNDALDCDVKLAKDYLDGLELNAGELVVLENVRFNKGEKKNEEELSKKYAALCDIFVMDAFGTAHRAQASTHGVGMNAPVACAGPLLAAELEALGKAMDNPERPLVAIVGGSKVSTKLTVLESLSKIADQLVVGGGIANTFIAAEGHNVGKSLYEADLVETAQKLMKECAIPVATDVACAKAFDENAEAEIKHVSEVQDDDMIFDLGPDSTAALAEIIGNAKTILWNGPVGVFEFKNFEAGTAGISKAIAESAGFSVAGGGDTLAAIDKFGIKADVSYISTGGGAFLEFVEGKVLPAVAMLEERAKA</sequence>
<protein>
    <recommendedName>
        <fullName evidence="1">Phosphoglycerate kinase</fullName>
        <ecNumber evidence="1">2.7.2.3</ecNumber>
    </recommendedName>
</protein>
<keyword id="KW-0067">ATP-binding</keyword>
<keyword id="KW-0963">Cytoplasm</keyword>
<keyword id="KW-0324">Glycolysis</keyword>
<keyword id="KW-0418">Kinase</keyword>
<keyword id="KW-0547">Nucleotide-binding</keyword>
<keyword id="KW-0808">Transferase</keyword>
<accession>B5F9T5</accession>